<reference key="1">
    <citation type="submission" date="2009-02" db="EMBL/GenBank/DDBJ databases">
        <title>Genome sequence of Bacillus cereus 03BB102.</title>
        <authorList>
            <person name="Dodson R.J."/>
            <person name="Jackson P."/>
            <person name="Munk A.C."/>
            <person name="Brettin T."/>
            <person name="Bruce D."/>
            <person name="Detter C."/>
            <person name="Tapia R."/>
            <person name="Han C."/>
            <person name="Sutton G."/>
            <person name="Sims D."/>
        </authorList>
    </citation>
    <scope>NUCLEOTIDE SEQUENCE [LARGE SCALE GENOMIC DNA]</scope>
    <source>
        <strain>03BB102</strain>
    </source>
</reference>
<name>HIS1_BACC3</name>
<protein>
    <recommendedName>
        <fullName evidence="1">ATP phosphoribosyltransferase</fullName>
        <shortName evidence="1">ATP-PRT</shortName>
        <shortName evidence="1">ATP-PRTase</shortName>
        <ecNumber evidence="1">2.4.2.17</ecNumber>
    </recommendedName>
</protein>
<accession>C1EMQ2</accession>
<keyword id="KW-0028">Amino-acid biosynthesis</keyword>
<keyword id="KW-0067">ATP-binding</keyword>
<keyword id="KW-0963">Cytoplasm</keyword>
<keyword id="KW-0328">Glycosyltransferase</keyword>
<keyword id="KW-0368">Histidine biosynthesis</keyword>
<keyword id="KW-0547">Nucleotide-binding</keyword>
<keyword id="KW-0808">Transferase</keyword>
<sequence>MRNIQIALTKGRLEKHVIPLFEQIGIDCSELKNKGRKLVFQSKNTDISFILVKAVDVATYVEHGVADIGVVGKDILMENEKDIYEMLDLGVGVCKFCVASIPTYNPKSYRKKCIATKYPHITSNYFHNKGEDVEIIKIEGSVEIAPILGLADAIVDIVETGKTLQENGLIVFEEMYSISARMIVNKAALKTKKDEIFSIINMMEQEILSGK</sequence>
<comment type="function">
    <text evidence="1">Catalyzes the condensation of ATP and 5-phosphoribose 1-diphosphate to form N'-(5'-phosphoribosyl)-ATP (PR-ATP). Has a crucial role in the pathway because the rate of histidine biosynthesis seems to be controlled primarily by regulation of HisG enzymatic activity.</text>
</comment>
<comment type="catalytic activity">
    <reaction evidence="1">
        <text>1-(5-phospho-beta-D-ribosyl)-ATP + diphosphate = 5-phospho-alpha-D-ribose 1-diphosphate + ATP</text>
        <dbReference type="Rhea" id="RHEA:18473"/>
        <dbReference type="ChEBI" id="CHEBI:30616"/>
        <dbReference type="ChEBI" id="CHEBI:33019"/>
        <dbReference type="ChEBI" id="CHEBI:58017"/>
        <dbReference type="ChEBI" id="CHEBI:73183"/>
        <dbReference type="EC" id="2.4.2.17"/>
    </reaction>
</comment>
<comment type="pathway">
    <text evidence="1">Amino-acid biosynthesis; L-histidine biosynthesis; L-histidine from 5-phospho-alpha-D-ribose 1-diphosphate: step 1/9.</text>
</comment>
<comment type="subunit">
    <text evidence="1">Heteromultimer composed of HisG and HisZ subunits.</text>
</comment>
<comment type="subcellular location">
    <subcellularLocation>
        <location evidence="1">Cytoplasm</location>
    </subcellularLocation>
</comment>
<comment type="domain">
    <text>Lacks the C-terminal regulatory region which is replaced by HisZ.</text>
</comment>
<comment type="similarity">
    <text evidence="1">Belongs to the ATP phosphoribosyltransferase family. Short subfamily.</text>
</comment>
<evidence type="ECO:0000255" key="1">
    <source>
        <dbReference type="HAMAP-Rule" id="MF_01018"/>
    </source>
</evidence>
<dbReference type="EC" id="2.4.2.17" evidence="1"/>
<dbReference type="EMBL" id="CP001407">
    <property type="protein sequence ID" value="ACO29606.1"/>
    <property type="molecule type" value="Genomic_DNA"/>
</dbReference>
<dbReference type="RefSeq" id="WP_001244471.1">
    <property type="nucleotide sequence ID" value="NZ_CP009318.1"/>
</dbReference>
<dbReference type="SMR" id="C1EMQ2"/>
<dbReference type="GeneID" id="45021404"/>
<dbReference type="KEGG" id="bcx:BCA_1460"/>
<dbReference type="PATRIC" id="fig|572264.18.peg.1410"/>
<dbReference type="UniPathway" id="UPA00031">
    <property type="reaction ID" value="UER00006"/>
</dbReference>
<dbReference type="Proteomes" id="UP000002210">
    <property type="component" value="Chromosome"/>
</dbReference>
<dbReference type="GO" id="GO:0005737">
    <property type="term" value="C:cytoplasm"/>
    <property type="evidence" value="ECO:0007669"/>
    <property type="project" value="UniProtKB-SubCell"/>
</dbReference>
<dbReference type="GO" id="GO:0005524">
    <property type="term" value="F:ATP binding"/>
    <property type="evidence" value="ECO:0007669"/>
    <property type="project" value="UniProtKB-KW"/>
</dbReference>
<dbReference type="GO" id="GO:0003879">
    <property type="term" value="F:ATP phosphoribosyltransferase activity"/>
    <property type="evidence" value="ECO:0007669"/>
    <property type="project" value="UniProtKB-UniRule"/>
</dbReference>
<dbReference type="GO" id="GO:0000105">
    <property type="term" value="P:L-histidine biosynthetic process"/>
    <property type="evidence" value="ECO:0007669"/>
    <property type="project" value="UniProtKB-UniRule"/>
</dbReference>
<dbReference type="CDD" id="cd13595">
    <property type="entry name" value="PBP2_HisGs"/>
    <property type="match status" value="1"/>
</dbReference>
<dbReference type="FunFam" id="3.40.190.10:FF:000011">
    <property type="entry name" value="ATP phosphoribosyltransferase"/>
    <property type="match status" value="1"/>
</dbReference>
<dbReference type="Gene3D" id="3.40.190.10">
    <property type="entry name" value="Periplasmic binding protein-like II"/>
    <property type="match status" value="2"/>
</dbReference>
<dbReference type="HAMAP" id="MF_01018">
    <property type="entry name" value="HisG_Short"/>
    <property type="match status" value="1"/>
</dbReference>
<dbReference type="InterPro" id="IPR013820">
    <property type="entry name" value="ATP_PRibTrfase_cat"/>
</dbReference>
<dbReference type="InterPro" id="IPR018198">
    <property type="entry name" value="ATP_PRibTrfase_CS"/>
</dbReference>
<dbReference type="InterPro" id="IPR001348">
    <property type="entry name" value="ATP_PRibTrfase_HisG"/>
</dbReference>
<dbReference type="InterPro" id="IPR024893">
    <property type="entry name" value="ATP_PRibTrfase_HisG_short"/>
</dbReference>
<dbReference type="NCBIfam" id="TIGR00070">
    <property type="entry name" value="hisG"/>
    <property type="match status" value="1"/>
</dbReference>
<dbReference type="PANTHER" id="PTHR21403:SF8">
    <property type="entry name" value="ATP PHOSPHORIBOSYLTRANSFERASE"/>
    <property type="match status" value="1"/>
</dbReference>
<dbReference type="PANTHER" id="PTHR21403">
    <property type="entry name" value="ATP PHOSPHORIBOSYLTRANSFERASE ATP-PRTASE"/>
    <property type="match status" value="1"/>
</dbReference>
<dbReference type="Pfam" id="PF01634">
    <property type="entry name" value="HisG"/>
    <property type="match status" value="1"/>
</dbReference>
<dbReference type="SUPFAM" id="SSF53850">
    <property type="entry name" value="Periplasmic binding protein-like II"/>
    <property type="match status" value="1"/>
</dbReference>
<dbReference type="PROSITE" id="PS01316">
    <property type="entry name" value="ATP_P_PHORIBOSYLTR"/>
    <property type="match status" value="1"/>
</dbReference>
<feature type="chain" id="PRO_1000213254" description="ATP phosphoribosyltransferase">
    <location>
        <begin position="1"/>
        <end position="211"/>
    </location>
</feature>
<proteinExistence type="inferred from homology"/>
<organism>
    <name type="scientific">Bacillus cereus (strain 03BB102)</name>
    <dbReference type="NCBI Taxonomy" id="572264"/>
    <lineage>
        <taxon>Bacteria</taxon>
        <taxon>Bacillati</taxon>
        <taxon>Bacillota</taxon>
        <taxon>Bacilli</taxon>
        <taxon>Bacillales</taxon>
        <taxon>Bacillaceae</taxon>
        <taxon>Bacillus</taxon>
        <taxon>Bacillus cereus group</taxon>
    </lineage>
</organism>
<gene>
    <name evidence="1" type="primary">hisG</name>
    <name type="ordered locus">BCA_1460</name>
</gene>